<dbReference type="EMBL" id="CP000673">
    <property type="protein sequence ID" value="EDK33619.1"/>
    <property type="molecule type" value="Genomic_DNA"/>
</dbReference>
<dbReference type="RefSeq" id="WP_012101972.1">
    <property type="nucleotide sequence ID" value="NC_009706.1"/>
</dbReference>
<dbReference type="SMR" id="A5N8I8"/>
<dbReference type="STRING" id="431943.CKL_1577"/>
<dbReference type="KEGG" id="ckl:CKL_1577"/>
<dbReference type="eggNOG" id="COG1923">
    <property type="taxonomic scope" value="Bacteria"/>
</dbReference>
<dbReference type="HOGENOM" id="CLU_113688_0_2_9"/>
<dbReference type="Proteomes" id="UP000002411">
    <property type="component" value="Chromosome"/>
</dbReference>
<dbReference type="GO" id="GO:0005829">
    <property type="term" value="C:cytosol"/>
    <property type="evidence" value="ECO:0007669"/>
    <property type="project" value="TreeGrafter"/>
</dbReference>
<dbReference type="GO" id="GO:0003723">
    <property type="term" value="F:RNA binding"/>
    <property type="evidence" value="ECO:0007669"/>
    <property type="project" value="UniProtKB-UniRule"/>
</dbReference>
<dbReference type="GO" id="GO:0006355">
    <property type="term" value="P:regulation of DNA-templated transcription"/>
    <property type="evidence" value="ECO:0007669"/>
    <property type="project" value="InterPro"/>
</dbReference>
<dbReference type="GO" id="GO:0043487">
    <property type="term" value="P:regulation of RNA stability"/>
    <property type="evidence" value="ECO:0007669"/>
    <property type="project" value="TreeGrafter"/>
</dbReference>
<dbReference type="GO" id="GO:0045974">
    <property type="term" value="P:regulation of translation, ncRNA-mediated"/>
    <property type="evidence" value="ECO:0007669"/>
    <property type="project" value="TreeGrafter"/>
</dbReference>
<dbReference type="CDD" id="cd01716">
    <property type="entry name" value="Hfq"/>
    <property type="match status" value="1"/>
</dbReference>
<dbReference type="Gene3D" id="2.30.30.100">
    <property type="match status" value="1"/>
</dbReference>
<dbReference type="HAMAP" id="MF_00436">
    <property type="entry name" value="Hfq"/>
    <property type="match status" value="1"/>
</dbReference>
<dbReference type="InterPro" id="IPR005001">
    <property type="entry name" value="Hfq"/>
</dbReference>
<dbReference type="InterPro" id="IPR010920">
    <property type="entry name" value="LSM_dom_sf"/>
</dbReference>
<dbReference type="InterPro" id="IPR047575">
    <property type="entry name" value="Sm"/>
</dbReference>
<dbReference type="NCBIfam" id="TIGR02383">
    <property type="entry name" value="Hfq"/>
    <property type="match status" value="1"/>
</dbReference>
<dbReference type="NCBIfam" id="NF001602">
    <property type="entry name" value="PRK00395.1"/>
    <property type="match status" value="1"/>
</dbReference>
<dbReference type="PANTHER" id="PTHR34772">
    <property type="entry name" value="RNA-BINDING PROTEIN HFQ"/>
    <property type="match status" value="1"/>
</dbReference>
<dbReference type="PANTHER" id="PTHR34772:SF1">
    <property type="entry name" value="RNA-BINDING PROTEIN HFQ"/>
    <property type="match status" value="1"/>
</dbReference>
<dbReference type="Pfam" id="PF17209">
    <property type="entry name" value="Hfq"/>
    <property type="match status" value="1"/>
</dbReference>
<dbReference type="SUPFAM" id="SSF50182">
    <property type="entry name" value="Sm-like ribonucleoproteins"/>
    <property type="match status" value="1"/>
</dbReference>
<dbReference type="PROSITE" id="PS52002">
    <property type="entry name" value="SM"/>
    <property type="match status" value="1"/>
</dbReference>
<protein>
    <recommendedName>
        <fullName evidence="1">RNA-binding protein Hfq</fullName>
    </recommendedName>
</protein>
<proteinExistence type="inferred from homology"/>
<reference key="1">
    <citation type="journal article" date="2008" name="Proc. Natl. Acad. Sci. U.S.A.">
        <title>The genome of Clostridium kluyveri, a strict anaerobe with unique metabolic features.</title>
        <authorList>
            <person name="Seedorf H."/>
            <person name="Fricke W.F."/>
            <person name="Veith B."/>
            <person name="Brueggemann H."/>
            <person name="Liesegang H."/>
            <person name="Strittmatter A."/>
            <person name="Miethke M."/>
            <person name="Buckel W."/>
            <person name="Hinderberger J."/>
            <person name="Li F."/>
            <person name="Hagemeier C."/>
            <person name="Thauer R.K."/>
            <person name="Gottschalk G."/>
        </authorList>
    </citation>
    <scope>NUCLEOTIDE SEQUENCE [LARGE SCALE GENOMIC DNA]</scope>
    <source>
        <strain>ATCC 8527 / DSM 555 / NBRC 12016 / NCIMB 10680 / K1</strain>
    </source>
</reference>
<sequence>MSKPANNLQDIFLNGARKNRIPVIVYLTNGFQIRGIVKGFDNFTVILECDGKQMMVYKHALSTITPSKAILFNTPAGTDDRS</sequence>
<comment type="function">
    <text evidence="1">RNA chaperone that binds small regulatory RNA (sRNAs) and mRNAs to facilitate mRNA translational regulation in response to envelope stress, environmental stress and changes in metabolite concentrations. Also binds with high specificity to tRNAs.</text>
</comment>
<comment type="subunit">
    <text evidence="1">Homohexamer.</text>
</comment>
<comment type="similarity">
    <text evidence="1">Belongs to the Hfq family.</text>
</comment>
<evidence type="ECO:0000255" key="1">
    <source>
        <dbReference type="HAMAP-Rule" id="MF_00436"/>
    </source>
</evidence>
<evidence type="ECO:0000255" key="2">
    <source>
        <dbReference type="PROSITE-ProRule" id="PRU01346"/>
    </source>
</evidence>
<name>HFQ_CLOK5</name>
<accession>A5N8I8</accession>
<organism>
    <name type="scientific">Clostridium kluyveri (strain ATCC 8527 / DSM 555 / NBRC 12016 / NCIMB 10680 / K1)</name>
    <dbReference type="NCBI Taxonomy" id="431943"/>
    <lineage>
        <taxon>Bacteria</taxon>
        <taxon>Bacillati</taxon>
        <taxon>Bacillota</taxon>
        <taxon>Clostridia</taxon>
        <taxon>Eubacteriales</taxon>
        <taxon>Clostridiaceae</taxon>
        <taxon>Clostridium</taxon>
    </lineage>
</organism>
<feature type="chain" id="PRO_1000080661" description="RNA-binding protein Hfq">
    <location>
        <begin position="1"/>
        <end position="82"/>
    </location>
</feature>
<feature type="domain" description="Sm" evidence="2">
    <location>
        <begin position="10"/>
        <end position="70"/>
    </location>
</feature>
<gene>
    <name evidence="1" type="primary">hfq</name>
    <name type="ordered locus">CKL_1577</name>
</gene>
<keyword id="KW-1185">Reference proteome</keyword>
<keyword id="KW-0694">RNA-binding</keyword>
<keyword id="KW-0346">Stress response</keyword>